<protein>
    <recommendedName>
        <fullName>Testis-specific Y-encoded protein 1</fullName>
    </recommendedName>
    <alternativeName>
        <fullName>bTSPY</fullName>
    </alternativeName>
</protein>
<evidence type="ECO:0000250" key="1"/>
<evidence type="ECO:0000250" key="2">
    <source>
        <dbReference type="UniProtKB" id="Q01534"/>
    </source>
</evidence>
<evidence type="ECO:0000256" key="3">
    <source>
        <dbReference type="SAM" id="MobiDB-lite"/>
    </source>
</evidence>
<evidence type="ECO:0000269" key="4">
    <source>
    </source>
</evidence>
<evidence type="ECO:0000269" key="5">
    <source>
    </source>
</evidence>
<evidence type="ECO:0000303" key="6">
    <source>
    </source>
</evidence>
<evidence type="ECO:0000305" key="7"/>
<sequence>MSRPFASAPARGHRQGQEERERRSEEGGSVPGPRTFQVVSPVVTPGQEATLFRVEAVEEGEARHEGDVAGIGREFQLLAEDIVEEVEVVADEEQEQRPSQELEEKTVEEQGQERPGGPCERQELDALQALAALQVELSSEREQNRRAYVQFMRKNHQRRKRHLARRSTIIQGIPGFWAKAIMSHPQVSVLISDQDQDFLGYMMDLKVQVRSHPPSRCKLIFSFRDNPYFLNSVIIKEYYLDITGYRARRSTPVHWFWDFERGAPSRRRDTRSLNFLNWLSGHNGPESNRIAEIISEDVWDDPLKYYLREEGSSVRDN</sequence>
<dbReference type="EMBL" id="U75889">
    <property type="protein sequence ID" value="AAB72137.1"/>
    <property type="molecule type" value="mRNA"/>
</dbReference>
<dbReference type="EMBL" id="U75890">
    <property type="protein sequence ID" value="AAB72138.1"/>
    <property type="molecule type" value="mRNA"/>
</dbReference>
<dbReference type="EMBL" id="U75891">
    <property type="protein sequence ID" value="AAB72139.1"/>
    <property type="molecule type" value="mRNA"/>
</dbReference>
<dbReference type="EMBL" id="U75892">
    <property type="protein sequence ID" value="AAB72140.1"/>
    <property type="molecule type" value="mRNA"/>
</dbReference>
<dbReference type="EMBL" id="U75894">
    <property type="protein sequence ID" value="AAB72142.1"/>
    <property type="status" value="ALT_INIT"/>
    <property type="molecule type" value="mRNA"/>
</dbReference>
<dbReference type="EMBL" id="U75896">
    <property type="protein sequence ID" value="AAB72143.1"/>
    <property type="molecule type" value="mRNA"/>
</dbReference>
<dbReference type="EMBL" id="X74028">
    <property type="status" value="NOT_ANNOTATED_CDS"/>
    <property type="molecule type" value="Genomic_DNA"/>
</dbReference>
<dbReference type="SMR" id="O19110"/>
<dbReference type="FunCoup" id="O19110">
    <property type="interactions" value="30"/>
</dbReference>
<dbReference type="PaxDb" id="9913-ENSBTAP00000052745"/>
<dbReference type="eggNOG" id="KOG1508">
    <property type="taxonomic scope" value="Eukaryota"/>
</dbReference>
<dbReference type="InParanoid" id="O19110"/>
<dbReference type="Proteomes" id="UP000009136">
    <property type="component" value="Unplaced"/>
</dbReference>
<dbReference type="GO" id="GO:0000785">
    <property type="term" value="C:chromatin"/>
    <property type="evidence" value="ECO:0000318"/>
    <property type="project" value="GO_Central"/>
</dbReference>
<dbReference type="GO" id="GO:0005737">
    <property type="term" value="C:cytoplasm"/>
    <property type="evidence" value="ECO:0007669"/>
    <property type="project" value="UniProtKB-SubCell"/>
</dbReference>
<dbReference type="GO" id="GO:0005634">
    <property type="term" value="C:nucleus"/>
    <property type="evidence" value="ECO:0000318"/>
    <property type="project" value="GO_Central"/>
</dbReference>
<dbReference type="GO" id="GO:0003682">
    <property type="term" value="F:chromatin binding"/>
    <property type="evidence" value="ECO:0000318"/>
    <property type="project" value="GO_Central"/>
</dbReference>
<dbReference type="GO" id="GO:0042393">
    <property type="term" value="F:histone binding"/>
    <property type="evidence" value="ECO:0000318"/>
    <property type="project" value="GO_Central"/>
</dbReference>
<dbReference type="GO" id="GO:0030154">
    <property type="term" value="P:cell differentiation"/>
    <property type="evidence" value="ECO:0007669"/>
    <property type="project" value="UniProtKB-KW"/>
</dbReference>
<dbReference type="GO" id="GO:0007506">
    <property type="term" value="P:gonadal mesoderm development"/>
    <property type="evidence" value="ECO:0007669"/>
    <property type="project" value="UniProtKB-KW"/>
</dbReference>
<dbReference type="GO" id="GO:0006334">
    <property type="term" value="P:nucleosome assembly"/>
    <property type="evidence" value="ECO:0007669"/>
    <property type="project" value="InterPro"/>
</dbReference>
<dbReference type="GO" id="GO:0007283">
    <property type="term" value="P:spermatogenesis"/>
    <property type="evidence" value="ECO:0007669"/>
    <property type="project" value="UniProtKB-KW"/>
</dbReference>
<dbReference type="Gene3D" id="1.20.5.1500">
    <property type="match status" value="1"/>
</dbReference>
<dbReference type="Gene3D" id="3.30.1120.90">
    <property type="entry name" value="Nucleosome assembly protein"/>
    <property type="match status" value="1"/>
</dbReference>
<dbReference type="InterPro" id="IPR037231">
    <property type="entry name" value="NAP-like_sf"/>
</dbReference>
<dbReference type="InterPro" id="IPR002164">
    <property type="entry name" value="NAP_family"/>
</dbReference>
<dbReference type="PANTHER" id="PTHR11875">
    <property type="entry name" value="TESTIS-SPECIFIC Y-ENCODED PROTEIN"/>
    <property type="match status" value="1"/>
</dbReference>
<dbReference type="Pfam" id="PF00956">
    <property type="entry name" value="NAP"/>
    <property type="match status" value="1"/>
</dbReference>
<dbReference type="SUPFAM" id="SSF143113">
    <property type="entry name" value="NAP-like"/>
    <property type="match status" value="1"/>
</dbReference>
<proteinExistence type="evidence at transcript level"/>
<feature type="chain" id="PRO_0000185667" description="Testis-specific Y-encoded protein 1">
    <location>
        <begin position="1"/>
        <end position="317"/>
    </location>
</feature>
<feature type="region of interest" description="Disordered" evidence="3">
    <location>
        <begin position="1"/>
        <end position="39"/>
    </location>
</feature>
<feature type="region of interest" description="Disordered" evidence="3">
    <location>
        <begin position="91"/>
        <end position="118"/>
    </location>
</feature>
<feature type="compositionally biased region" description="Basic and acidic residues" evidence="3">
    <location>
        <begin position="15"/>
        <end position="26"/>
    </location>
</feature>
<feature type="compositionally biased region" description="Basic and acidic residues" evidence="3">
    <location>
        <begin position="95"/>
        <end position="112"/>
    </location>
</feature>
<feature type="splice variant" id="VSP_008013" description="In isoform 2." evidence="6">
    <original>SSVRDN</original>
    <variation>RTQ</variation>
    <location>
        <begin position="312"/>
        <end position="317"/>
    </location>
</feature>
<feature type="sequence variant" evidence="5">
    <original>Y</original>
    <variation>L</variation>
    <location>
        <position position="306"/>
    </location>
</feature>
<feature type="sequence variant" evidence="5">
    <original>V</original>
    <variation>M</variation>
    <location>
        <position position="314"/>
    </location>
</feature>
<feature type="sequence conflict" description="In Ref. 2." evidence="7" ref="2">
    <original>T</original>
    <variation>A</variation>
    <location>
        <position position="168"/>
    </location>
</feature>
<keyword id="KW-0025">Alternative splicing</keyword>
<keyword id="KW-0963">Cytoplasm</keyword>
<keyword id="KW-0217">Developmental protein</keyword>
<keyword id="KW-0221">Differentiation</keyword>
<keyword id="KW-0334">Gonadal differentiation</keyword>
<keyword id="KW-0539">Nucleus</keyword>
<keyword id="KW-0597">Phosphoprotein</keyword>
<keyword id="KW-1185">Reference proteome</keyword>
<keyword id="KW-0744">Spermatogenesis</keyword>
<organism>
    <name type="scientific">Bos taurus</name>
    <name type="common">Bovine</name>
    <dbReference type="NCBI Taxonomy" id="9913"/>
    <lineage>
        <taxon>Eukaryota</taxon>
        <taxon>Metazoa</taxon>
        <taxon>Chordata</taxon>
        <taxon>Craniata</taxon>
        <taxon>Vertebrata</taxon>
        <taxon>Euteleostomi</taxon>
        <taxon>Mammalia</taxon>
        <taxon>Eutheria</taxon>
        <taxon>Laurasiatheria</taxon>
        <taxon>Artiodactyla</taxon>
        <taxon>Ruminantia</taxon>
        <taxon>Pecora</taxon>
        <taxon>Bovidae</taxon>
        <taxon>Bovinae</taxon>
        <taxon>Bos</taxon>
    </lineage>
</organism>
<reference key="1">
    <citation type="journal article" date="1997" name="Mamm. Genome">
        <title>Organization and expression of bovine TSPY.</title>
        <authorList>
            <person name="Vogel T."/>
            <person name="Dechend F."/>
            <person name="Manz E."/>
            <person name="Jung C."/>
            <person name="Jakubiczka S."/>
            <person name="Fehr S."/>
            <person name="Schmidtke J."/>
            <person name="Schnieders F."/>
        </authorList>
    </citation>
    <scope>NUCLEOTIDE SEQUENCE [MRNA] (ISOFORMS 1 AND 2)</scope>
    <scope>VARIANTS LEU-306 AND MET-314</scope>
    <scope>ALTERNATIVE SPLICING</scope>
    <scope>TISSUE SPECIFICITY</scope>
    <scope>DEVELOPMENTAL STAGE</scope>
    <source>
        <tissue>Testis</tissue>
    </source>
</reference>
<reference key="2">
    <citation type="journal article" date="1993" name="Genomics">
        <title>A bovine homologue of the human TSPY gene.</title>
        <authorList>
            <person name="Jakubiczka S."/>
            <person name="Schnieders F."/>
            <person name="Schmidtke J."/>
        </authorList>
    </citation>
    <scope>NUCLEOTIDE SEQUENCE [GENOMIC DNA] OF 145-206</scope>
    <scope>TISSUE SPECIFICITY</scope>
    <source>
        <strain>Holstein</strain>
    </source>
</reference>
<gene>
    <name type="primary">TSPY1</name>
    <name type="synonym">TSPY</name>
</gene>
<accession>O19110</accession>
<accession>O19106</accession>
<accession>O19107</accession>
<accession>O19109</accession>
<accession>O19185</accession>
<comment type="function">
    <text evidence="2">May be involved in sperm differentiation and proliferation.</text>
</comment>
<comment type="subcellular location">
    <subcellularLocation>
        <location evidence="2">Cytoplasm</location>
    </subcellularLocation>
    <subcellularLocation>
        <location evidence="2">Nucleus</location>
    </subcellularLocation>
    <text evidence="2">Predominantly cytoplasmic. Also found in nucleus.</text>
</comment>
<comment type="alternative products">
    <event type="alternative splicing"/>
    <isoform>
        <id>O19110-1</id>
        <name>1</name>
        <sequence type="displayed"/>
    </isoform>
    <isoform>
        <id>O19110-2</id>
        <name>2</name>
        <sequence type="described" ref="VSP_008013"/>
    </isoform>
</comment>
<comment type="tissue specificity">
    <text evidence="4 5">Testis. Probably in spermatogonia.</text>
</comment>
<comment type="developmental stage">
    <text evidence="5">Detected in 6 and 7-week-old testis.</text>
</comment>
<comment type="PTM">
    <text evidence="1">Phosphorylated.</text>
</comment>
<comment type="similarity">
    <text evidence="7">Belongs to the nucleosome assembly protein (NAP) family.</text>
</comment>
<comment type="caution">
    <text evidence="7">Maps to a tandemly repeated region on chromosome Y. Between 50 and 200 copies per Y chromosome are reported.</text>
</comment>
<comment type="sequence caution" evidence="7">
    <conflict type="erroneous initiation">
        <sequence resource="EMBL-CDS" id="AAB72142"/>
    </conflict>
</comment>
<name>TSPY1_BOVIN</name>